<sequence length="24" mass="2714">GIFSNMYXRTPAGYFRGPXGYXXN</sequence>
<feature type="chain" id="PRO_0000074256" description="Defensin D6">
    <location>
        <begin position="1"/>
        <end position="24" status="greater than"/>
    </location>
</feature>
<feature type="non-terminal residue" evidence="1">
    <location>
        <position position="24"/>
    </location>
</feature>
<keyword id="KW-0044">Antibiotic</keyword>
<keyword id="KW-0929">Antimicrobial</keyword>
<keyword id="KW-0134">Cell wall</keyword>
<keyword id="KW-0903">Direct protein sequencing</keyword>
<keyword id="KW-0295">Fungicide</keyword>
<keyword id="KW-0611">Plant defense</keyword>
<keyword id="KW-1185">Reference proteome</keyword>
<keyword id="KW-0964">Secreted</keyword>
<reference evidence="1" key="1">
    <citation type="journal article" date="1998" name="FEBS Lett.">
        <title>Novel defensin subfamily from spinach (Spinacia oleracea).</title>
        <authorList>
            <person name="Segura A."/>
            <person name="Moreno M."/>
            <person name="Molina A."/>
            <person name="Garcia-Olmedo F."/>
        </authorList>
    </citation>
    <scope>PROTEIN SEQUENCE</scope>
    <source>
        <strain>cv. Matador</strain>
        <tissue>Leaf</tissue>
    </source>
</reference>
<accession>P81567</accession>
<dbReference type="Proteomes" id="UP001155700">
    <property type="component" value="Unplaced"/>
</dbReference>
<dbReference type="GO" id="GO:0005576">
    <property type="term" value="C:extracellular region"/>
    <property type="evidence" value="ECO:0007669"/>
    <property type="project" value="UniProtKB-KW"/>
</dbReference>
<dbReference type="GO" id="GO:0042742">
    <property type="term" value="P:defense response to bacterium"/>
    <property type="evidence" value="ECO:0007669"/>
    <property type="project" value="UniProtKB-KW"/>
</dbReference>
<dbReference type="GO" id="GO:0050832">
    <property type="term" value="P:defense response to fungus"/>
    <property type="evidence" value="ECO:0007669"/>
    <property type="project" value="UniProtKB-KW"/>
</dbReference>
<dbReference type="GO" id="GO:0031640">
    <property type="term" value="P:killing of cells of another organism"/>
    <property type="evidence" value="ECO:0007669"/>
    <property type="project" value="UniProtKB-KW"/>
</dbReference>
<name>DEFD6_SPIOL</name>
<evidence type="ECO:0000305" key="1"/>
<proteinExistence type="evidence at protein level"/>
<organism evidence="1">
    <name type="scientific">Spinacia oleracea</name>
    <name type="common">Spinach</name>
    <dbReference type="NCBI Taxonomy" id="3562"/>
    <lineage>
        <taxon>Eukaryota</taxon>
        <taxon>Viridiplantae</taxon>
        <taxon>Streptophyta</taxon>
        <taxon>Embryophyta</taxon>
        <taxon>Tracheophyta</taxon>
        <taxon>Spermatophyta</taxon>
        <taxon>Magnoliopsida</taxon>
        <taxon>eudicotyledons</taxon>
        <taxon>Gunneridae</taxon>
        <taxon>Pentapetalae</taxon>
        <taxon>Caryophyllales</taxon>
        <taxon>Chenopodiaceae</taxon>
        <taxon>Chenopodioideae</taxon>
        <taxon>Anserineae</taxon>
        <taxon>Spinacia</taxon>
    </lineage>
</organism>
<protein>
    <recommendedName>
        <fullName>Defensin D6</fullName>
    </recommendedName>
    <alternativeName>
        <fullName>Antimicrobial peptide D6</fullName>
    </alternativeName>
    <alternativeName>
        <fullName>So-D6</fullName>
    </alternativeName>
</protein>
<comment type="function">
    <text>Antimicrobial peptide. Active against Fusarium spp., Gram-positive and Gram-negative bacterial pathogens.</text>
</comment>
<comment type="subcellular location">
    <subcellularLocation>
        <location evidence="1">Secreted</location>
        <location evidence="1">Cell wall</location>
    </subcellularLocation>
</comment>
<comment type="tissue specificity">
    <text>Distributed in the epidermal cell layer of leaves and in the subepidermal layer region of stems. Not in roots.</text>
</comment>
<comment type="developmental stage">
    <text>Present throughout the life of the leaf.</text>
</comment>
<comment type="similarity">
    <text evidence="1">Belongs to the DEFL family. Group IV subfamily.</text>
</comment>